<dbReference type="EC" id="3.2.1.28" evidence="4"/>
<dbReference type="EMBL" id="JH725151">
    <property type="protein sequence ID" value="EJP70258.1"/>
    <property type="molecule type" value="Genomic_DNA"/>
</dbReference>
<dbReference type="RefSeq" id="XP_008594446.1">
    <property type="nucleotide sequence ID" value="XM_008596224.1"/>
</dbReference>
<dbReference type="SMR" id="J5K1E2"/>
<dbReference type="FunCoup" id="J5K1E2">
    <property type="interactions" value="292"/>
</dbReference>
<dbReference type="STRING" id="655819.J5K1E2"/>
<dbReference type="EnsemblFungi" id="BB8028_0003g07070.1">
    <property type="protein sequence ID" value="BB8028_0003g07070.1"/>
    <property type="gene ID" value="BB8028_0003g07070"/>
</dbReference>
<dbReference type="GeneID" id="19884139"/>
<dbReference type="HOGENOM" id="CLU_006451_1_1_1"/>
<dbReference type="InParanoid" id="J5K1E2"/>
<dbReference type="OrthoDB" id="216at474943"/>
<dbReference type="Proteomes" id="UP000002762">
    <property type="component" value="Unassembled WGS sequence"/>
</dbReference>
<dbReference type="GO" id="GO:0005946">
    <property type="term" value="C:alpha,alpha-trehalose-phosphate synthase complex (UDP-forming)"/>
    <property type="evidence" value="ECO:0007669"/>
    <property type="project" value="EnsemblFungi"/>
</dbReference>
<dbReference type="GO" id="GO:0004555">
    <property type="term" value="F:alpha,alpha-trehalase activity"/>
    <property type="evidence" value="ECO:0007669"/>
    <property type="project" value="UniProtKB-EC"/>
</dbReference>
<dbReference type="GO" id="GO:0005509">
    <property type="term" value="F:calcium ion binding"/>
    <property type="evidence" value="ECO:0007669"/>
    <property type="project" value="EnsemblFungi"/>
</dbReference>
<dbReference type="GO" id="GO:0015927">
    <property type="term" value="F:trehalase activity"/>
    <property type="evidence" value="ECO:0000314"/>
    <property type="project" value="UniProtKB"/>
</dbReference>
<dbReference type="GO" id="GO:0030437">
    <property type="term" value="P:ascospore formation"/>
    <property type="evidence" value="ECO:0007669"/>
    <property type="project" value="EnsemblFungi"/>
</dbReference>
<dbReference type="GO" id="GO:0005993">
    <property type="term" value="P:trehalose catabolic process"/>
    <property type="evidence" value="ECO:0000314"/>
    <property type="project" value="UniProtKB"/>
</dbReference>
<dbReference type="FunFam" id="1.50.10.10:FF:000026">
    <property type="entry name" value="Trehalase"/>
    <property type="match status" value="1"/>
</dbReference>
<dbReference type="Gene3D" id="1.50.10.10">
    <property type="match status" value="1"/>
</dbReference>
<dbReference type="InterPro" id="IPR008928">
    <property type="entry name" value="6-hairpin_glycosidase_sf"/>
</dbReference>
<dbReference type="InterPro" id="IPR012341">
    <property type="entry name" value="6hp_glycosidase-like_sf"/>
</dbReference>
<dbReference type="InterPro" id="IPR001661">
    <property type="entry name" value="Glyco_hydro_37"/>
</dbReference>
<dbReference type="InterPro" id="IPR018232">
    <property type="entry name" value="Glyco_hydro_37_CS"/>
</dbReference>
<dbReference type="InterPro" id="IPR011120">
    <property type="entry name" value="Trehalase_Ca-bd"/>
</dbReference>
<dbReference type="PANTHER" id="PTHR23403:SF6">
    <property type="entry name" value="CYTOSOLIC NEUTRAL TREHALASE-RELATED"/>
    <property type="match status" value="1"/>
</dbReference>
<dbReference type="PANTHER" id="PTHR23403">
    <property type="entry name" value="TREHALASE"/>
    <property type="match status" value="1"/>
</dbReference>
<dbReference type="Pfam" id="PF01204">
    <property type="entry name" value="Trehalase"/>
    <property type="match status" value="1"/>
</dbReference>
<dbReference type="Pfam" id="PF07492">
    <property type="entry name" value="Trehalase_Ca-bi"/>
    <property type="match status" value="1"/>
</dbReference>
<dbReference type="PRINTS" id="PR00744">
    <property type="entry name" value="GLHYDRLASE37"/>
</dbReference>
<dbReference type="SUPFAM" id="SSF48208">
    <property type="entry name" value="Six-hairpin glycosidases"/>
    <property type="match status" value="1"/>
</dbReference>
<dbReference type="PROSITE" id="PS00927">
    <property type="entry name" value="TREHALASE_1"/>
    <property type="match status" value="1"/>
</dbReference>
<dbReference type="PROSITE" id="PS00928">
    <property type="entry name" value="TREHALASE_2"/>
    <property type="match status" value="1"/>
</dbReference>
<comment type="function">
    <text evidence="4">Hydrolyzes intracellular trehalose to glucose.</text>
</comment>
<comment type="catalytic activity">
    <reaction evidence="4">
        <text>alpha,alpha-trehalose + H2O = alpha-D-glucose + beta-D-glucose</text>
        <dbReference type="Rhea" id="RHEA:32675"/>
        <dbReference type="ChEBI" id="CHEBI:15377"/>
        <dbReference type="ChEBI" id="CHEBI:15903"/>
        <dbReference type="ChEBI" id="CHEBI:16551"/>
        <dbReference type="ChEBI" id="CHEBI:17925"/>
        <dbReference type="EC" id="3.2.1.28"/>
    </reaction>
</comment>
<comment type="cofactor">
    <cofactor evidence="2">
        <name>Ca(2+)</name>
        <dbReference type="ChEBI" id="CHEBI:29108"/>
    </cofactor>
</comment>
<comment type="biophysicochemical properties">
    <phDependence>
        <text evidence="4">Optimum pH is 7.0 at 55 degrees Celsius.</text>
    </phDependence>
    <temperatureDependence>
        <text evidence="4">Optimum temperature is 55 degrees Celsius at pH 7.0.</text>
    </temperatureDependence>
</comment>
<comment type="pathway">
    <text evidence="6">Carbohydrate degradation.</text>
</comment>
<comment type="subcellular location">
    <subcellularLocation>
        <location evidence="2">Cytoplasm</location>
    </subcellularLocation>
</comment>
<comment type="similarity">
    <text evidence="6">Belongs to the glycosyl hydrolase 37 family.</text>
</comment>
<gene>
    <name evidence="5" type="primary">NTH1</name>
    <name evidence="7" type="ORF">BBA_01127</name>
</gene>
<proteinExistence type="evidence at protein level"/>
<name>TREA_BEAB2</name>
<evidence type="ECO:0000250" key="1">
    <source>
        <dbReference type="UniProtKB" id="P13482"/>
    </source>
</evidence>
<evidence type="ECO:0000250" key="2">
    <source>
        <dbReference type="UniProtKB" id="P32356"/>
    </source>
</evidence>
<evidence type="ECO:0000255" key="3">
    <source>
        <dbReference type="RuleBase" id="RU361180"/>
    </source>
</evidence>
<evidence type="ECO:0000269" key="4">
    <source>
    </source>
</evidence>
<evidence type="ECO:0000303" key="5">
    <source>
    </source>
</evidence>
<evidence type="ECO:0000305" key="6"/>
<evidence type="ECO:0000312" key="7">
    <source>
        <dbReference type="EMBL" id="EJP70258.1"/>
    </source>
</evidence>
<evidence type="ECO:0000312" key="8">
    <source>
        <dbReference type="Proteomes" id="UP000002762"/>
    </source>
</evidence>
<feature type="chain" id="PRO_0000452800" description="Cytosolic neutral trehalase">
    <location>
        <begin position="1"/>
        <end position="743"/>
    </location>
</feature>
<feature type="active site" description="Proton donor/acceptor" evidence="2">
    <location>
        <position position="459"/>
    </location>
</feature>
<feature type="active site" description="Proton donor/acceptor" evidence="2">
    <location>
        <position position="664"/>
    </location>
</feature>
<feature type="binding site" evidence="2">
    <location>
        <position position="95"/>
    </location>
    <ligand>
        <name>Ca(2+)</name>
        <dbReference type="ChEBI" id="CHEBI:29108"/>
    </ligand>
</feature>
<feature type="binding site" evidence="2">
    <location>
        <position position="97"/>
    </location>
    <ligand>
        <name>Ca(2+)</name>
        <dbReference type="ChEBI" id="CHEBI:29108"/>
    </ligand>
</feature>
<feature type="binding site" evidence="2">
    <location>
        <position position="99"/>
    </location>
    <ligand>
        <name>Ca(2+)</name>
        <dbReference type="ChEBI" id="CHEBI:29108"/>
    </ligand>
</feature>
<feature type="binding site" evidence="2">
    <location>
        <position position="101"/>
    </location>
    <ligand>
        <name>Ca(2+)</name>
        <dbReference type="ChEBI" id="CHEBI:29108"/>
    </ligand>
</feature>
<feature type="binding site" evidence="2">
    <location>
        <position position="106"/>
    </location>
    <ligand>
        <name>Ca(2+)</name>
        <dbReference type="ChEBI" id="CHEBI:29108"/>
    </ligand>
</feature>
<feature type="binding site" evidence="1">
    <location>
        <position position="285"/>
    </location>
    <ligand>
        <name>substrate</name>
    </ligand>
</feature>
<feature type="binding site" evidence="2">
    <location>
        <begin position="292"/>
        <end position="293"/>
    </location>
    <ligand>
        <name>substrate</name>
    </ligand>
</feature>
<feature type="binding site" evidence="2">
    <location>
        <position position="329"/>
    </location>
    <ligand>
        <name>substrate</name>
    </ligand>
</feature>
<feature type="binding site" evidence="2">
    <location>
        <begin position="338"/>
        <end position="340"/>
    </location>
    <ligand>
        <name>substrate</name>
    </ligand>
</feature>
<feature type="binding site" evidence="2">
    <location>
        <position position="405"/>
    </location>
    <ligand>
        <name>substrate</name>
    </ligand>
</feature>
<feature type="binding site" evidence="2">
    <location>
        <position position="454"/>
    </location>
    <ligand>
        <name>substrate</name>
    </ligand>
</feature>
<feature type="binding site" evidence="2">
    <location>
        <position position="457"/>
    </location>
    <ligand>
        <name>substrate</name>
    </ligand>
</feature>
<accession>J5K1E2</accession>
<protein>
    <recommendedName>
        <fullName evidence="6">Cytosolic neutral trehalase</fullName>
        <ecNumber evidence="4">3.2.1.28</ecNumber>
    </recommendedName>
    <alternativeName>
        <fullName evidence="6">Alpha,alpha-trehalase</fullName>
    </alternativeName>
    <alternativeName>
        <fullName evidence="3">Alpha-trehalose glucohydrolase</fullName>
    </alternativeName>
</protein>
<reference evidence="8" key="1">
    <citation type="journal article" date="2012" name="Sci. Rep.">
        <title>Genomic perspectives on the evolution of fungal entomopathogenicity in Beauveria bassiana.</title>
        <authorList>
            <person name="Xiao G."/>
            <person name="Ying S.-H."/>
            <person name="Zheng P."/>
            <person name="Wang Z.-L."/>
            <person name="Zhang S."/>
            <person name="Xie X.-Q."/>
            <person name="Shang Y."/>
            <person name="St Leger R.J."/>
            <person name="Zhao G.-P."/>
            <person name="Wang C."/>
            <person name="Feng M.-G."/>
        </authorList>
    </citation>
    <scope>NUCLEOTIDE SEQUENCE [LARGE SCALE GENOMIC DNA]</scope>
    <source>
        <strain evidence="8">ARSEF 2860</strain>
    </source>
</reference>
<reference evidence="6" key="2">
    <citation type="journal article" date="2011" name="Microbiol. Res.">
        <title>Characterization of Beauveria bassiana neutral trehalase (BbNTH1) and recognition of crucial stress-responsive elements to control its expression in response to multiple stresses.</title>
        <authorList>
            <person name="Liu Q."/>
            <person name="Ying S.H."/>
            <person name="Feng M.G."/>
        </authorList>
    </citation>
    <scope>FUNCTION</scope>
    <scope>CATALYTIC ACTIVITY</scope>
    <scope>BIOPHYSICOCHEMICAL PROPERTIES</scope>
</reference>
<organism evidence="8">
    <name type="scientific">Beauveria bassiana (strain ARSEF 2860)</name>
    <name type="common">White muscardine disease fungus</name>
    <name type="synonym">Tritirachium shiotae</name>
    <dbReference type="NCBI Taxonomy" id="655819"/>
    <lineage>
        <taxon>Eukaryota</taxon>
        <taxon>Fungi</taxon>
        <taxon>Dikarya</taxon>
        <taxon>Ascomycota</taxon>
        <taxon>Pezizomycotina</taxon>
        <taxon>Sordariomycetes</taxon>
        <taxon>Hypocreomycetidae</taxon>
        <taxon>Hypocreales</taxon>
        <taxon>Cordycipitaceae</taxon>
        <taxon>Beauveria</taxon>
    </lineage>
</organism>
<sequence length="743" mass="85411">MSDSTAPSAHRPRGSEDFGVFDDAKTYYASDERHTGRFANRTRTYSQSSLIKQIERLNLPEPFRRGSHDESNLEQGRRFLIQVDATLESLKAQEDTDGNMQITIEDSGPKVLPLRTAASAGYHRFEVRGTYMLSNLLQELTLAKEYGRKQIILDEARLNENPVNRLSRLIKDHFWDGLTRRIDASSIEIAARDPKDWTDDPRPRIYIPSKCTAQFEYYKQVALDRPEIRLDVQLLPEVITPEIIRDMNEKPGLLAVAVEEVEEQDPVKGTIKTLRGLPFVVPGGRFNELYGWDSYMESLGLLVNDRVDLAKAMVLNFCFCIEHYGKILNATRSYYLGRSQPPFLTDMALRVYEKIKHEPDALEFLRRSILAAIKEYHSVWTGQARLDPTTGLSRYCPEGLGVPPETEPSHFVHILQPYIKKHGMEFDEFVRAYNHGEIKEPELDNYFMHDRAVRESGHDTSYRFEGVCANLATIDLNSLLFKYETDISRTIRSLFDDKLVMPEEFCQGTPYKPGDILTSALWDRKAKRRKLTMDKLMWNEEEGMFFDYDFVNKKRCTYETATTLWSLWAGLASPKQAADIVKKGLPKFEEFGGLLAGTESSRGEIGLERPNRQWDYPYGWAPQQMLAWTGLLRYSFNEEAERLAYKWLFMITKAFVDFNGVVVEKYDVTRPIDPHRVDAEYGNQGLNFKGVAKEGFGWVNASYVYGLQIVNAHMRRALGTLTPYPTFIKAIEQLNEKALADLE</sequence>
<keyword id="KW-0106">Calcium</keyword>
<keyword id="KW-0963">Cytoplasm</keyword>
<keyword id="KW-0326">Glycosidase</keyword>
<keyword id="KW-0378">Hydrolase</keyword>
<keyword id="KW-0479">Metal-binding</keyword>
<keyword id="KW-1185">Reference proteome</keyword>